<protein>
    <recommendedName>
        <fullName evidence="1">UPF0125 protein HD_1828</fullName>
    </recommendedName>
</protein>
<reference key="1">
    <citation type="submission" date="2003-06" db="EMBL/GenBank/DDBJ databases">
        <title>The complete genome sequence of Haemophilus ducreyi.</title>
        <authorList>
            <person name="Munson R.S. Jr."/>
            <person name="Ray W.C."/>
            <person name="Mahairas G."/>
            <person name="Sabo P."/>
            <person name="Mungur R."/>
            <person name="Johnson L."/>
            <person name="Nguyen D."/>
            <person name="Wang J."/>
            <person name="Forst C."/>
            <person name="Hood L."/>
        </authorList>
    </citation>
    <scope>NUCLEOTIDE SEQUENCE [LARGE SCALE GENOMIC DNA]</scope>
    <source>
        <strain>35000HP / ATCC 700724</strain>
    </source>
</reference>
<accession>Q7VKP5</accession>
<proteinExistence type="inferred from homology"/>
<feature type="chain" id="PRO_0000192490" description="UPF0125 protein HD_1828">
    <location>
        <begin position="1"/>
        <end position="100"/>
    </location>
</feature>
<dbReference type="EMBL" id="AE017143">
    <property type="protein sequence ID" value="AAP96577.1"/>
    <property type="molecule type" value="Genomic_DNA"/>
</dbReference>
<dbReference type="RefSeq" id="WP_010945606.1">
    <property type="nucleotide sequence ID" value="NC_002940.2"/>
</dbReference>
<dbReference type="SMR" id="Q7VKP5"/>
<dbReference type="STRING" id="233412.HD_1828"/>
<dbReference type="GeneID" id="60733876"/>
<dbReference type="KEGG" id="hdu:HD_1828"/>
<dbReference type="eggNOG" id="COG2914">
    <property type="taxonomic scope" value="Bacteria"/>
</dbReference>
<dbReference type="HOGENOM" id="CLU_150721_1_0_6"/>
<dbReference type="OrthoDB" id="9796575at2"/>
<dbReference type="Proteomes" id="UP000001022">
    <property type="component" value="Chromosome"/>
</dbReference>
<dbReference type="Gene3D" id="3.10.20.280">
    <property type="entry name" value="RnfH-like"/>
    <property type="match status" value="1"/>
</dbReference>
<dbReference type="HAMAP" id="MF_00460">
    <property type="entry name" value="UPF0125_RnfH"/>
    <property type="match status" value="1"/>
</dbReference>
<dbReference type="InterPro" id="IPR016155">
    <property type="entry name" value="Mopterin_synth/thiamin_S_b"/>
</dbReference>
<dbReference type="InterPro" id="IPR005346">
    <property type="entry name" value="RnfH"/>
</dbReference>
<dbReference type="InterPro" id="IPR037021">
    <property type="entry name" value="RnfH_sf"/>
</dbReference>
<dbReference type="NCBIfam" id="NF002490">
    <property type="entry name" value="PRK01777.1"/>
    <property type="match status" value="1"/>
</dbReference>
<dbReference type="PANTHER" id="PTHR37483">
    <property type="entry name" value="UPF0125 PROTEIN RATB"/>
    <property type="match status" value="1"/>
</dbReference>
<dbReference type="PANTHER" id="PTHR37483:SF1">
    <property type="entry name" value="UPF0125 PROTEIN RATB"/>
    <property type="match status" value="1"/>
</dbReference>
<dbReference type="Pfam" id="PF03658">
    <property type="entry name" value="Ub-RnfH"/>
    <property type="match status" value="1"/>
</dbReference>
<dbReference type="SUPFAM" id="SSF54285">
    <property type="entry name" value="MoaD/ThiS"/>
    <property type="match status" value="1"/>
</dbReference>
<evidence type="ECO:0000255" key="1">
    <source>
        <dbReference type="HAMAP-Rule" id="MF_00460"/>
    </source>
</evidence>
<sequence length="100" mass="11449">MVSESSQIVVEIIYAYPDQYFLKKISLDQPTTIQNVILQSGILAKYTEIDLRINKVGIFSRPAKLTDYVAHGDRIEIYRPLVADPKEIRRKRAAEQAQKA</sequence>
<organism>
    <name type="scientific">Haemophilus ducreyi (strain 35000HP / ATCC 700724)</name>
    <dbReference type="NCBI Taxonomy" id="233412"/>
    <lineage>
        <taxon>Bacteria</taxon>
        <taxon>Pseudomonadati</taxon>
        <taxon>Pseudomonadota</taxon>
        <taxon>Gammaproteobacteria</taxon>
        <taxon>Pasteurellales</taxon>
        <taxon>Pasteurellaceae</taxon>
        <taxon>Haemophilus</taxon>
    </lineage>
</organism>
<comment type="similarity">
    <text evidence="1">Belongs to the UPF0125 (RnfH) family.</text>
</comment>
<gene>
    <name type="ordered locus">HD_1828</name>
</gene>
<keyword id="KW-1185">Reference proteome</keyword>
<name>Y1828_HAEDU</name>